<protein>
    <recommendedName>
        <fullName evidence="1">Protein ApaG</fullName>
    </recommendedName>
</protein>
<name>APAG_SINFN</name>
<evidence type="ECO:0000255" key="1">
    <source>
        <dbReference type="HAMAP-Rule" id="MF_00791"/>
    </source>
</evidence>
<sequence length="130" mass="14613">MYRALTRDIEVTVEPYYLEEQSDPDDSRYVWGYRIVISNHSEIAVRLMTRYWHITDENGQVDEVSGPGVIGEQPLLNPGDTYEYSSGCPLDTPSGVMFGHYSMEAEDGETFNVAIPAFSLDSPGLVRTLN</sequence>
<reference key="1">
    <citation type="journal article" date="2009" name="Appl. Environ. Microbiol.">
        <title>Rhizobium sp. strain NGR234 possesses a remarkable number of secretion systems.</title>
        <authorList>
            <person name="Schmeisser C."/>
            <person name="Liesegang H."/>
            <person name="Krysciak D."/>
            <person name="Bakkou N."/>
            <person name="Le Quere A."/>
            <person name="Wollherr A."/>
            <person name="Heinemeyer I."/>
            <person name="Morgenstern B."/>
            <person name="Pommerening-Roeser A."/>
            <person name="Flores M."/>
            <person name="Palacios R."/>
            <person name="Brenner S."/>
            <person name="Gottschalk G."/>
            <person name="Schmitz R.A."/>
            <person name="Broughton W.J."/>
            <person name="Perret X."/>
            <person name="Strittmatter A.W."/>
            <person name="Streit W.R."/>
        </authorList>
    </citation>
    <scope>NUCLEOTIDE SEQUENCE [LARGE SCALE GENOMIC DNA]</scope>
    <source>
        <strain>NBRC 101917 / NGR234</strain>
    </source>
</reference>
<gene>
    <name evidence="1" type="primary">apaG</name>
    <name type="ordered locus">NGR_c01540</name>
</gene>
<feature type="chain" id="PRO_1000148502" description="Protein ApaG">
    <location>
        <begin position="1"/>
        <end position="130"/>
    </location>
</feature>
<feature type="domain" description="ApaG" evidence="1">
    <location>
        <begin position="3"/>
        <end position="127"/>
    </location>
</feature>
<organism>
    <name type="scientific">Sinorhizobium fredii (strain NBRC 101917 / NGR234)</name>
    <dbReference type="NCBI Taxonomy" id="394"/>
    <lineage>
        <taxon>Bacteria</taxon>
        <taxon>Pseudomonadati</taxon>
        <taxon>Pseudomonadota</taxon>
        <taxon>Alphaproteobacteria</taxon>
        <taxon>Hyphomicrobiales</taxon>
        <taxon>Rhizobiaceae</taxon>
        <taxon>Sinorhizobium/Ensifer group</taxon>
        <taxon>Sinorhizobium</taxon>
    </lineage>
</organism>
<proteinExistence type="inferred from homology"/>
<dbReference type="EMBL" id="CP001389">
    <property type="protein sequence ID" value="ACP23956.1"/>
    <property type="molecule type" value="Genomic_DNA"/>
</dbReference>
<dbReference type="RefSeq" id="WP_012706741.1">
    <property type="nucleotide sequence ID" value="NC_012587.1"/>
</dbReference>
<dbReference type="RefSeq" id="YP_002824709.1">
    <property type="nucleotide sequence ID" value="NC_012587.1"/>
</dbReference>
<dbReference type="SMR" id="C3MFB9"/>
<dbReference type="STRING" id="394.NGR_c01540"/>
<dbReference type="KEGG" id="rhi:NGR_c01540"/>
<dbReference type="PATRIC" id="fig|394.7.peg.2950"/>
<dbReference type="eggNOG" id="COG2967">
    <property type="taxonomic scope" value="Bacteria"/>
</dbReference>
<dbReference type="HOGENOM" id="CLU_128074_1_0_5"/>
<dbReference type="OrthoDB" id="9795226at2"/>
<dbReference type="Proteomes" id="UP000001054">
    <property type="component" value="Chromosome"/>
</dbReference>
<dbReference type="GO" id="GO:0070987">
    <property type="term" value="P:error-free translesion synthesis"/>
    <property type="evidence" value="ECO:0007669"/>
    <property type="project" value="TreeGrafter"/>
</dbReference>
<dbReference type="Gene3D" id="2.60.40.1470">
    <property type="entry name" value="ApaG domain"/>
    <property type="match status" value="1"/>
</dbReference>
<dbReference type="HAMAP" id="MF_00791">
    <property type="entry name" value="ApaG"/>
    <property type="match status" value="1"/>
</dbReference>
<dbReference type="InterPro" id="IPR007474">
    <property type="entry name" value="ApaG_domain"/>
</dbReference>
<dbReference type="InterPro" id="IPR036767">
    <property type="entry name" value="ApaG_sf"/>
</dbReference>
<dbReference type="InterPro" id="IPR023065">
    <property type="entry name" value="Uncharacterised_ApaG"/>
</dbReference>
<dbReference type="NCBIfam" id="NF003967">
    <property type="entry name" value="PRK05461.1"/>
    <property type="match status" value="1"/>
</dbReference>
<dbReference type="PANTHER" id="PTHR14289">
    <property type="entry name" value="F-BOX ONLY PROTEIN 3"/>
    <property type="match status" value="1"/>
</dbReference>
<dbReference type="PANTHER" id="PTHR14289:SF16">
    <property type="entry name" value="POLYMERASE DELTA-INTERACTING PROTEIN 2"/>
    <property type="match status" value="1"/>
</dbReference>
<dbReference type="Pfam" id="PF04379">
    <property type="entry name" value="DUF525"/>
    <property type="match status" value="1"/>
</dbReference>
<dbReference type="SUPFAM" id="SSF110069">
    <property type="entry name" value="ApaG-like"/>
    <property type="match status" value="1"/>
</dbReference>
<dbReference type="PROSITE" id="PS51087">
    <property type="entry name" value="APAG"/>
    <property type="match status" value="1"/>
</dbReference>
<keyword id="KW-1185">Reference proteome</keyword>
<accession>C3MFB9</accession>